<sequence>MKTSILFVIFGLALLFALSVAIEMEEEETDRGCGTMWSPCSTEKPCCDNFSCQPAIKWCIWSP</sequence>
<comment type="function">
    <text evidence="4">Inhibits preferentially tetrodotoxin-insensitive sodium currents (Nav) on rat cardiac myocytes (IC(50) is 0.26 uM) and has weaker inhibition activity toward tetrodotoxin-sensitive sodium currents on rat dorsal root ganglion (DRG) sensory neurons (IC(50) is 0.83 uM) and on cockroach dorsal unpaired median (DUM) neurons (IC(50) is 1.19 uM). Has no significant effect on potassium currents on DRG neurons.</text>
</comment>
<comment type="subcellular location">
    <subcellularLocation>
        <location>Secreted</location>
    </subcellularLocation>
</comment>
<comment type="tissue specificity">
    <text>Expressed by the venom gland.</text>
</comment>
<comment type="domain">
    <text evidence="1">The presence of a 'disulfide through disulfide knot' structurally defines this protein as a knottin.</text>
</comment>
<comment type="mass spectrometry"/>
<comment type="similarity">
    <text evidence="5">Belongs to the neurotoxin 10 (Hwtx-1) family. 36 (Jztx-2) subfamily.</text>
</comment>
<reference key="1">
    <citation type="journal article" date="2008" name="Biochem. Pharmacol.">
        <title>Jingzhaotoxin-II, a novel tarantula toxin preferentially targets rat cardiac sodium channel.</title>
        <authorList>
            <person name="Wang M."/>
            <person name="Liu Q."/>
            <person name="Luo H."/>
            <person name="Li J."/>
            <person name="Tang J."/>
            <person name="Xiao Y."/>
            <person name="Liang S."/>
        </authorList>
    </citation>
    <scope>NUCLEOTIDE SEQUENCE [MRNA]</scope>
    <scope>PROTEIN SEQUENCE OF 32-63</scope>
    <scope>FUNCTION</scope>
    <scope>MASS SPECTROMETRY</scope>
    <scope>TOXIN TARGET</scope>
    <source>
        <tissue>Venom</tissue>
        <tissue>Venom gland</tissue>
    </source>
</reference>
<reference key="2">
    <citation type="journal article" date="2008" name="Cell. Mol. Life Sci.">
        <title>Molecular diversity and evolution of cystine knot toxins of the tarantula Chilobrachys jingzhao.</title>
        <authorList>
            <person name="Chen J."/>
            <person name="Deng M."/>
            <person name="He Q."/>
            <person name="Meng E."/>
            <person name="Jiang L."/>
            <person name="Liao Z."/>
            <person name="Rong M."/>
            <person name="Liang S."/>
        </authorList>
    </citation>
    <scope>NUCLEOTIDE SEQUENCE [LARGE SCALE MRNA]</scope>
    <source>
        <tissue>Venom gland</tissue>
    </source>
</reference>
<reference key="3">
    <citation type="journal article" date="2007" name="Proteomics">
        <title>Proteomic and peptidomic analysis of the venom from Chinese tarantula Chilobrachys jingzhao.</title>
        <authorList>
            <person name="Liao Z."/>
            <person name="Cao J."/>
            <person name="Li S."/>
            <person name="Yan X."/>
            <person name="Hu W."/>
            <person name="He Q."/>
            <person name="Chen J."/>
            <person name="Tang J."/>
            <person name="Xie J."/>
            <person name="Liang S."/>
        </authorList>
    </citation>
    <scope>PROTEIN SEQUENCE OF 32-63</scope>
    <scope>IDENTIFICATION BY MASS SPECTROMETRY</scope>
    <source>
        <tissue>Venom</tissue>
    </source>
</reference>
<name>JZTX2_CHIGU</name>
<dbReference type="EMBL" id="EU233850">
    <property type="protein sequence ID" value="ABY71669.1"/>
    <property type="molecule type" value="mRNA"/>
</dbReference>
<dbReference type="SMR" id="B1P1B9"/>
<dbReference type="ArachnoServer" id="AS000799">
    <property type="toxin name" value="delta-theraphotoxin-Cg3a"/>
</dbReference>
<dbReference type="GO" id="GO:0005576">
    <property type="term" value="C:extracellular region"/>
    <property type="evidence" value="ECO:0007669"/>
    <property type="project" value="UniProtKB-SubCell"/>
</dbReference>
<dbReference type="GO" id="GO:0008200">
    <property type="term" value="F:ion channel inhibitor activity"/>
    <property type="evidence" value="ECO:0007669"/>
    <property type="project" value="InterPro"/>
</dbReference>
<dbReference type="GO" id="GO:0017080">
    <property type="term" value="F:sodium channel regulator activity"/>
    <property type="evidence" value="ECO:0007669"/>
    <property type="project" value="UniProtKB-KW"/>
</dbReference>
<dbReference type="GO" id="GO:0090729">
    <property type="term" value="F:toxin activity"/>
    <property type="evidence" value="ECO:0007669"/>
    <property type="project" value="UniProtKB-KW"/>
</dbReference>
<dbReference type="InterPro" id="IPR011696">
    <property type="entry name" value="Huwentoxin-1"/>
</dbReference>
<dbReference type="Pfam" id="PF07740">
    <property type="entry name" value="Toxin_12"/>
    <property type="match status" value="1"/>
</dbReference>
<dbReference type="SUPFAM" id="SSF57059">
    <property type="entry name" value="omega toxin-like"/>
    <property type="match status" value="1"/>
</dbReference>
<feature type="signal peptide" evidence="2">
    <location>
        <begin position="1"/>
        <end position="21"/>
    </location>
</feature>
<feature type="propeptide" id="PRO_0000398392" evidence="3 4">
    <location>
        <begin position="22"/>
        <end position="31"/>
    </location>
</feature>
<feature type="peptide" id="PRO_0000398393" description="U7-theraphotoxin-Cg1a">
    <location>
        <begin position="32"/>
        <end position="63"/>
    </location>
</feature>
<feature type="disulfide bond" evidence="1">
    <location>
        <begin position="33"/>
        <end position="47"/>
    </location>
</feature>
<feature type="disulfide bond" evidence="1">
    <location>
        <begin position="40"/>
        <end position="52"/>
    </location>
</feature>
<feature type="disulfide bond" evidence="1">
    <location>
        <begin position="46"/>
        <end position="59"/>
    </location>
</feature>
<proteinExistence type="evidence at protein level"/>
<evidence type="ECO:0000250" key="1"/>
<evidence type="ECO:0000255" key="2"/>
<evidence type="ECO:0000269" key="3">
    <source>
    </source>
</evidence>
<evidence type="ECO:0000269" key="4">
    <source>
    </source>
</evidence>
<evidence type="ECO:0000305" key="5"/>
<organism>
    <name type="scientific">Chilobrachys guangxiensis</name>
    <name type="common">Chinese earth tiger tarantula</name>
    <name type="synonym">Chilobrachys jingzhao</name>
    <dbReference type="NCBI Taxonomy" id="278060"/>
    <lineage>
        <taxon>Eukaryota</taxon>
        <taxon>Metazoa</taxon>
        <taxon>Ecdysozoa</taxon>
        <taxon>Arthropoda</taxon>
        <taxon>Chelicerata</taxon>
        <taxon>Arachnida</taxon>
        <taxon>Araneae</taxon>
        <taxon>Mygalomorphae</taxon>
        <taxon>Theraphosidae</taxon>
        <taxon>Chilobrachys</taxon>
    </lineage>
</organism>
<accession>B1P1B9</accession>
<keyword id="KW-0903">Direct protein sequencing</keyword>
<keyword id="KW-1015">Disulfide bond</keyword>
<keyword id="KW-0872">Ion channel impairing toxin</keyword>
<keyword id="KW-0960">Knottin</keyword>
<keyword id="KW-0528">Neurotoxin</keyword>
<keyword id="KW-0964">Secreted</keyword>
<keyword id="KW-0732">Signal</keyword>
<keyword id="KW-0800">Toxin</keyword>
<keyword id="KW-0738">Voltage-gated sodium channel impairing toxin</keyword>
<protein>
    <recommendedName>
        <fullName>U7-theraphotoxin-Cg1a</fullName>
        <shortName>U7-TRTX-Cg1a</shortName>
    </recommendedName>
    <alternativeName>
        <fullName>Jingzhaotoxin-2</fullName>
        <shortName>JZTX-2</shortName>
    </alternativeName>
    <alternativeName>
        <fullName>Peptide F2-32.19</fullName>
    </alternativeName>
</protein>